<comment type="function">
    <text evidence="1">Catalyzes the synthesis of Und-PP-GlcNAc-ManNAcA-Fuc4NAc (Lipid III), the third lipid-linked intermediate involved in ECA synthesis.</text>
</comment>
<comment type="catalytic activity">
    <reaction evidence="1">
        <text>beta-D-ManNAcA-(1-&gt;4)-alpha-D-GlcNAc-di-trans,octa-cis-undecaprenyl diphosphate + dTDP-4-acetamido-4,6-dideoxy-alpha-D-galactose = alpha-D-FucNAc4-(1-&gt;4)-beta-D-ManNAcA-(1-&gt;4)-D-GlcNAc-undecaprenyl diphosphate + dTDP + H(+)</text>
        <dbReference type="Rhea" id="RHEA:28759"/>
        <dbReference type="ChEBI" id="CHEBI:15378"/>
        <dbReference type="ChEBI" id="CHEBI:58369"/>
        <dbReference type="ChEBI" id="CHEBI:61495"/>
        <dbReference type="ChEBI" id="CHEBI:61496"/>
        <dbReference type="ChEBI" id="CHEBI:68493"/>
        <dbReference type="EC" id="2.4.1.325"/>
    </reaction>
</comment>
<comment type="pathway">
    <text evidence="1">Bacterial outer membrane biogenesis; enterobacterial common antigen biosynthesis.</text>
</comment>
<comment type="subcellular location">
    <subcellularLocation>
        <location evidence="1">Cell inner membrane</location>
        <topology evidence="1">Peripheral membrane protein</topology>
    </subcellularLocation>
</comment>
<comment type="similarity">
    <text evidence="1">Belongs to the glycosyltransferase 56 family.</text>
</comment>
<reference key="1">
    <citation type="journal article" date="2003" name="Nat. Biotechnol.">
        <title>The genome sequence of the entomopathogenic bacterium Photorhabdus luminescens.</title>
        <authorList>
            <person name="Duchaud E."/>
            <person name="Rusniok C."/>
            <person name="Frangeul L."/>
            <person name="Buchrieser C."/>
            <person name="Givaudan A."/>
            <person name="Taourit S."/>
            <person name="Bocs S."/>
            <person name="Boursaux-Eude C."/>
            <person name="Chandler M."/>
            <person name="Charles J.-F."/>
            <person name="Dassa E."/>
            <person name="Derose R."/>
            <person name="Derzelle S."/>
            <person name="Freyssinet G."/>
            <person name="Gaudriault S."/>
            <person name="Medigue C."/>
            <person name="Lanois A."/>
            <person name="Powell K."/>
            <person name="Siguier P."/>
            <person name="Vincent R."/>
            <person name="Wingate V."/>
            <person name="Zouine M."/>
            <person name="Glaser P."/>
            <person name="Boemare N."/>
            <person name="Danchin A."/>
            <person name="Kunst F."/>
        </authorList>
    </citation>
    <scope>NUCLEOTIDE SEQUENCE [LARGE SCALE GENOMIC DNA]</scope>
    <source>
        <strain>DSM 15139 / CIP 105565 / TT01</strain>
    </source>
</reference>
<evidence type="ECO:0000255" key="1">
    <source>
        <dbReference type="HAMAP-Rule" id="MF_01002"/>
    </source>
</evidence>
<keyword id="KW-0997">Cell inner membrane</keyword>
<keyword id="KW-1003">Cell membrane</keyword>
<keyword id="KW-0328">Glycosyltransferase</keyword>
<keyword id="KW-0472">Membrane</keyword>
<keyword id="KW-1185">Reference proteome</keyword>
<keyword id="KW-0808">Transferase</keyword>
<dbReference type="EC" id="2.4.1.325" evidence="1"/>
<dbReference type="EMBL" id="BX571874">
    <property type="protein sequence ID" value="CAE17025.1"/>
    <property type="molecule type" value="Genomic_DNA"/>
</dbReference>
<dbReference type="RefSeq" id="WP_011148723.1">
    <property type="nucleotide sequence ID" value="NC_005126.1"/>
</dbReference>
<dbReference type="SMR" id="Q7MYM4"/>
<dbReference type="STRING" id="243265.plu4653"/>
<dbReference type="CAZy" id="GT56">
    <property type="family name" value="Glycosyltransferase Family 56"/>
</dbReference>
<dbReference type="GeneID" id="48850870"/>
<dbReference type="KEGG" id="plu:plu4653"/>
<dbReference type="eggNOG" id="COG0554">
    <property type="taxonomic scope" value="Bacteria"/>
</dbReference>
<dbReference type="HOGENOM" id="CLU_066584_0_0_6"/>
<dbReference type="OrthoDB" id="6532169at2"/>
<dbReference type="UniPathway" id="UPA00566"/>
<dbReference type="Proteomes" id="UP000002514">
    <property type="component" value="Chromosome"/>
</dbReference>
<dbReference type="GO" id="GO:0005886">
    <property type="term" value="C:plasma membrane"/>
    <property type="evidence" value="ECO:0007669"/>
    <property type="project" value="UniProtKB-SubCell"/>
</dbReference>
<dbReference type="GO" id="GO:0102031">
    <property type="term" value="F:4-acetamido-4,6-dideoxy-D-galactose transferase activity"/>
    <property type="evidence" value="ECO:0007669"/>
    <property type="project" value="UniProtKB-EC"/>
</dbReference>
<dbReference type="GO" id="GO:0008417">
    <property type="term" value="F:fucosyltransferase activity"/>
    <property type="evidence" value="ECO:0007669"/>
    <property type="project" value="InterPro"/>
</dbReference>
<dbReference type="GO" id="GO:0009246">
    <property type="term" value="P:enterobacterial common antigen biosynthetic process"/>
    <property type="evidence" value="ECO:0007669"/>
    <property type="project" value="UniProtKB-UniRule"/>
</dbReference>
<dbReference type="GO" id="GO:0036065">
    <property type="term" value="P:fucosylation"/>
    <property type="evidence" value="ECO:0007669"/>
    <property type="project" value="InterPro"/>
</dbReference>
<dbReference type="HAMAP" id="MF_01002">
    <property type="entry name" value="WecF_RffT"/>
    <property type="match status" value="1"/>
</dbReference>
<dbReference type="InterPro" id="IPR009993">
    <property type="entry name" value="WecF"/>
</dbReference>
<dbReference type="NCBIfam" id="NF002753">
    <property type="entry name" value="PRK02797.1-2"/>
    <property type="match status" value="1"/>
</dbReference>
<dbReference type="Pfam" id="PF07429">
    <property type="entry name" value="Glyco_transf_56"/>
    <property type="match status" value="1"/>
</dbReference>
<feature type="chain" id="PRO_0000216184" description="TDP-N-acetylfucosamine:lipid II N-acetylfucosaminyltransferase">
    <location>
        <begin position="1"/>
        <end position="361"/>
    </location>
</feature>
<organism>
    <name type="scientific">Photorhabdus laumondii subsp. laumondii (strain DSM 15139 / CIP 105565 / TT01)</name>
    <name type="common">Photorhabdus luminescens subsp. laumondii</name>
    <dbReference type="NCBI Taxonomy" id="243265"/>
    <lineage>
        <taxon>Bacteria</taxon>
        <taxon>Pseudomonadati</taxon>
        <taxon>Pseudomonadota</taxon>
        <taxon>Gammaproteobacteria</taxon>
        <taxon>Enterobacterales</taxon>
        <taxon>Morganellaceae</taxon>
        <taxon>Photorhabdus</taxon>
    </lineage>
</organism>
<gene>
    <name evidence="1" type="primary">wecF</name>
    <name evidence="1" type="synonym">rffT</name>
    <name type="ordered locus">plu4653</name>
</gene>
<protein>
    <recommendedName>
        <fullName evidence="1">TDP-N-acetylfucosamine:lipid II N-acetylfucosaminyltransferase</fullName>
        <ecNumber evidence="1">2.4.1.325</ecNumber>
    </recommendedName>
    <alternativeName>
        <fullName evidence="1">4-alpha-L-fucosyltransferase</fullName>
    </alternativeName>
    <alternativeName>
        <fullName evidence="1">TDP-Fuc4NAc:lipid II Fuc4NAc transferase</fullName>
        <shortName evidence="1">Fuc4NAc transferase</shortName>
    </alternativeName>
</protein>
<accession>Q7MYM4</accession>
<name>WECF_PHOLL</name>
<sequence length="361" mass="41759">MTTLIHVLGSDIPHHNRTVLRFFNDVLVQEIGFLAKPKFMVVTKNRALLDDCPALDMAFFDSKKSLAQAVIAQACSDRDCRFFFHGQFNVSLWLALLSGKIKRHQFWWHAWGADLYEDSQQLKFRLFYFLRRLAQRRVGHVFAVRGDLYFYSQHHPNVPTSLLYFPTRMEPALTIAERVPVEDGKMTILLGNSGDRSNRHITALKVIHKQFGDKVRIIIPMGYPENNQVYINQVEQAALSLFRPENLNIIKQNMAFDDYLALLRRCDLGYFMFNRQQGIGTICLLIQFGVPFVLSRQNLFWRDLIEQQVPVFFAGNPLDSQLIAEAQRQMLSLDRNVIAFFSPNFIDGWRQALAKAAGEQQ</sequence>
<proteinExistence type="inferred from homology"/>